<reference key="1">
    <citation type="journal article" date="2006" name="J. Bacteriol.">
        <title>Chromosome rearrangement and diversification of Francisella tularensis revealed by the type B (OSU18) genome sequence.</title>
        <authorList>
            <person name="Petrosino J.F."/>
            <person name="Xiang Q."/>
            <person name="Karpathy S.E."/>
            <person name="Jiang H."/>
            <person name="Yerrapragada S."/>
            <person name="Liu Y."/>
            <person name="Gioia J."/>
            <person name="Hemphill L."/>
            <person name="Gonzalez A."/>
            <person name="Raghavan T.M."/>
            <person name="Uzman A."/>
            <person name="Fox G.E."/>
            <person name="Highlander S."/>
            <person name="Reichard M."/>
            <person name="Morton R.J."/>
            <person name="Clinkenbeard K.D."/>
            <person name="Weinstock G.M."/>
        </authorList>
    </citation>
    <scope>NUCLEOTIDE SEQUENCE [LARGE SCALE GENOMIC DNA]</scope>
    <source>
        <strain>OSU18</strain>
    </source>
</reference>
<organism>
    <name type="scientific">Francisella tularensis subsp. holarctica (strain OSU18)</name>
    <dbReference type="NCBI Taxonomy" id="393011"/>
    <lineage>
        <taxon>Bacteria</taxon>
        <taxon>Pseudomonadati</taxon>
        <taxon>Pseudomonadota</taxon>
        <taxon>Gammaproteobacteria</taxon>
        <taxon>Thiotrichales</taxon>
        <taxon>Francisellaceae</taxon>
        <taxon>Francisella</taxon>
    </lineage>
</organism>
<gene>
    <name evidence="1" type="primary">truA</name>
    <name type="ordered locus">FTH_1044</name>
</gene>
<dbReference type="EC" id="5.4.99.12" evidence="1"/>
<dbReference type="EMBL" id="CP000437">
    <property type="protein sequence ID" value="ABI82933.1"/>
    <property type="molecule type" value="Genomic_DNA"/>
</dbReference>
<dbReference type="RefSeq" id="WP_003015996.1">
    <property type="nucleotide sequence ID" value="NC_017463.1"/>
</dbReference>
<dbReference type="SMR" id="Q0BLV1"/>
<dbReference type="KEGG" id="fth:FTH_1044"/>
<dbReference type="GO" id="GO:0003723">
    <property type="term" value="F:RNA binding"/>
    <property type="evidence" value="ECO:0007669"/>
    <property type="project" value="InterPro"/>
</dbReference>
<dbReference type="GO" id="GO:0160147">
    <property type="term" value="F:tRNA pseudouridine(38-40) synthase activity"/>
    <property type="evidence" value="ECO:0007669"/>
    <property type="project" value="UniProtKB-EC"/>
</dbReference>
<dbReference type="GO" id="GO:0031119">
    <property type="term" value="P:tRNA pseudouridine synthesis"/>
    <property type="evidence" value="ECO:0007669"/>
    <property type="project" value="UniProtKB-UniRule"/>
</dbReference>
<dbReference type="CDD" id="cd02570">
    <property type="entry name" value="PseudoU_synth_EcTruA"/>
    <property type="match status" value="1"/>
</dbReference>
<dbReference type="FunFam" id="3.30.70.580:FF:000001">
    <property type="entry name" value="tRNA pseudouridine synthase A"/>
    <property type="match status" value="1"/>
</dbReference>
<dbReference type="Gene3D" id="3.30.70.660">
    <property type="entry name" value="Pseudouridine synthase I, catalytic domain, C-terminal subdomain"/>
    <property type="match status" value="1"/>
</dbReference>
<dbReference type="Gene3D" id="3.30.70.580">
    <property type="entry name" value="Pseudouridine synthase I, catalytic domain, N-terminal subdomain"/>
    <property type="match status" value="1"/>
</dbReference>
<dbReference type="HAMAP" id="MF_00171">
    <property type="entry name" value="TruA"/>
    <property type="match status" value="1"/>
</dbReference>
<dbReference type="InterPro" id="IPR020103">
    <property type="entry name" value="PsdUridine_synth_cat_dom_sf"/>
</dbReference>
<dbReference type="InterPro" id="IPR001406">
    <property type="entry name" value="PsdUridine_synth_TruA"/>
</dbReference>
<dbReference type="InterPro" id="IPR020097">
    <property type="entry name" value="PsdUridine_synth_TruA_a/b_dom"/>
</dbReference>
<dbReference type="InterPro" id="IPR020095">
    <property type="entry name" value="PsdUridine_synth_TruA_C"/>
</dbReference>
<dbReference type="InterPro" id="IPR020094">
    <property type="entry name" value="TruA/RsuA/RluB/E/F_N"/>
</dbReference>
<dbReference type="NCBIfam" id="TIGR00071">
    <property type="entry name" value="hisT_truA"/>
    <property type="match status" value="1"/>
</dbReference>
<dbReference type="PANTHER" id="PTHR11142">
    <property type="entry name" value="PSEUDOURIDYLATE SYNTHASE"/>
    <property type="match status" value="1"/>
</dbReference>
<dbReference type="PANTHER" id="PTHR11142:SF0">
    <property type="entry name" value="TRNA PSEUDOURIDINE SYNTHASE-LIKE 1"/>
    <property type="match status" value="1"/>
</dbReference>
<dbReference type="Pfam" id="PF01416">
    <property type="entry name" value="PseudoU_synth_1"/>
    <property type="match status" value="2"/>
</dbReference>
<dbReference type="PIRSF" id="PIRSF001430">
    <property type="entry name" value="tRNA_psdUrid_synth"/>
    <property type="match status" value="1"/>
</dbReference>
<dbReference type="SUPFAM" id="SSF55120">
    <property type="entry name" value="Pseudouridine synthase"/>
    <property type="match status" value="1"/>
</dbReference>
<comment type="function">
    <text evidence="1">Formation of pseudouridine at positions 38, 39 and 40 in the anticodon stem and loop of transfer RNAs.</text>
</comment>
<comment type="catalytic activity">
    <reaction evidence="1">
        <text>uridine(38/39/40) in tRNA = pseudouridine(38/39/40) in tRNA</text>
        <dbReference type="Rhea" id="RHEA:22376"/>
        <dbReference type="Rhea" id="RHEA-COMP:10085"/>
        <dbReference type="Rhea" id="RHEA-COMP:10087"/>
        <dbReference type="ChEBI" id="CHEBI:65314"/>
        <dbReference type="ChEBI" id="CHEBI:65315"/>
        <dbReference type="EC" id="5.4.99.12"/>
    </reaction>
</comment>
<comment type="subunit">
    <text evidence="1">Homodimer.</text>
</comment>
<comment type="similarity">
    <text evidence="1">Belongs to the tRNA pseudouridine synthase TruA family.</text>
</comment>
<evidence type="ECO:0000255" key="1">
    <source>
        <dbReference type="HAMAP-Rule" id="MF_00171"/>
    </source>
</evidence>
<accession>Q0BLV1</accession>
<sequence>MKNYLLQIEYFGKNYCGWQRQSHSLSVQEELEKALSKIANQNIEVTCAGRTDTGVHATSQIVNFYSNAYRPLSAWQRGVNALLPQDIKILAVQQVDNNFNSRFTAINRTYNYIIYNSATSSPIFAEHCLWENRELDIDKMNQACEYLLGEQDFSSFRSSQCQSNTPFRNIQKAEFIKQGSFIVFEVVGNAFLHHMIRNLVGSLLKVGLGFESPEWIKVVLEAKDRTQAAETAKAHGLYFVGVEYPEFSFKRQIIKLFC</sequence>
<keyword id="KW-0413">Isomerase</keyword>
<keyword id="KW-0819">tRNA processing</keyword>
<proteinExistence type="inferred from homology"/>
<name>TRUA_FRATO</name>
<protein>
    <recommendedName>
        <fullName evidence="1">tRNA pseudouridine synthase A</fullName>
        <ecNumber evidence="1">5.4.99.12</ecNumber>
    </recommendedName>
    <alternativeName>
        <fullName evidence="1">tRNA pseudouridine(38-40) synthase</fullName>
    </alternativeName>
    <alternativeName>
        <fullName evidence="1">tRNA pseudouridylate synthase I</fullName>
    </alternativeName>
    <alternativeName>
        <fullName evidence="1">tRNA-uridine isomerase I</fullName>
    </alternativeName>
</protein>
<feature type="chain" id="PRO_1000017086" description="tRNA pseudouridine synthase A">
    <location>
        <begin position="1"/>
        <end position="258"/>
    </location>
</feature>
<feature type="active site" description="Nucleophile" evidence="1">
    <location>
        <position position="52"/>
    </location>
</feature>
<feature type="binding site" evidence="1">
    <location>
        <position position="110"/>
    </location>
    <ligand>
        <name>substrate</name>
    </ligand>
</feature>